<keyword id="KW-0143">Chaperone</keyword>
<keyword id="KW-0963">Cytoplasm</keyword>
<keyword id="KW-0235">DNA replication</keyword>
<keyword id="KW-0479">Metal-binding</keyword>
<keyword id="KW-0677">Repeat</keyword>
<keyword id="KW-0346">Stress response</keyword>
<keyword id="KW-0862">Zinc</keyword>
<keyword id="KW-0863">Zinc-finger</keyword>
<sequence>MAKRDYYEVLGVGKNASDDEIKKAYRKLAMKYHPDRNPDSKESEEKFKEVKEAYEMLSDAEKKAAYDQYGHAGVDPNMAGGFGGGQGYGGFAEAFGDIFGDIFGQQAGGGRRGGGGPQAYRGADLRYSMEISLEQAAHGHEAQIRVPHWDDCDHCHGNGAEPGSSVETCPTCHGAGQVRVSQGFFSMQQTCPKCHGSGKFIPKPCTKCHGQGKLKSQKTLEVKIPAGIDEGMRIRSSGNGEPGINGGPPGDLYVEVHIKAHPVFERDGDDLHCQMPISFATAALGGDLEVPTLNGKATFPVPEATQSGKTFRLRGKGIKGVRSGYPGDLYVHVNVETPVKLTEAQKDMLRQFDRSVHEGGSRHSPQEQSWLDKVKSFFS</sequence>
<protein>
    <recommendedName>
        <fullName evidence="1">Chaperone protein DnaJ</fullName>
    </recommendedName>
</protein>
<evidence type="ECO:0000255" key="1">
    <source>
        <dbReference type="HAMAP-Rule" id="MF_01152"/>
    </source>
</evidence>
<evidence type="ECO:0000256" key="2">
    <source>
        <dbReference type="SAM" id="MobiDB-lite"/>
    </source>
</evidence>
<name>DNAJ_CUPPJ</name>
<accession>Q46XI8</accession>
<proteinExistence type="inferred from homology"/>
<comment type="function">
    <text evidence="1">Participates actively in the response to hyperosmotic and heat shock by preventing the aggregation of stress-denatured proteins and by disaggregating proteins, also in an autonomous, DnaK-independent fashion. Unfolded proteins bind initially to DnaJ; upon interaction with the DnaJ-bound protein, DnaK hydrolyzes its bound ATP, resulting in the formation of a stable complex. GrpE releases ADP from DnaK; ATP binding to DnaK triggers the release of the substrate protein, thus completing the reaction cycle. Several rounds of ATP-dependent interactions between DnaJ, DnaK and GrpE are required for fully efficient folding. Also involved, together with DnaK and GrpE, in the DNA replication of plasmids through activation of initiation proteins.</text>
</comment>
<comment type="cofactor">
    <cofactor evidence="1">
        <name>Zn(2+)</name>
        <dbReference type="ChEBI" id="CHEBI:29105"/>
    </cofactor>
    <text evidence="1">Binds 2 Zn(2+) ions per monomer.</text>
</comment>
<comment type="subunit">
    <text evidence="1">Homodimer.</text>
</comment>
<comment type="subcellular location">
    <subcellularLocation>
        <location evidence="1">Cytoplasm</location>
    </subcellularLocation>
</comment>
<comment type="domain">
    <text evidence="1">The J domain is necessary and sufficient to stimulate DnaK ATPase activity. Zinc center 1 plays an important role in the autonomous, DnaK-independent chaperone activity of DnaJ. Zinc center 2 is essential for interaction with DnaK and for DnaJ activity.</text>
</comment>
<comment type="similarity">
    <text evidence="1">Belongs to the DnaJ family.</text>
</comment>
<feature type="chain" id="PRO_1000085262" description="Chaperone protein DnaJ">
    <location>
        <begin position="1"/>
        <end position="379"/>
    </location>
</feature>
<feature type="domain" description="J" evidence="1">
    <location>
        <begin position="5"/>
        <end position="70"/>
    </location>
</feature>
<feature type="repeat" description="CXXCXGXG motif">
    <location>
        <begin position="152"/>
        <end position="159"/>
    </location>
</feature>
<feature type="repeat" description="CXXCXGXG motif">
    <location>
        <begin position="169"/>
        <end position="176"/>
    </location>
</feature>
<feature type="repeat" description="CXXCXGXG motif">
    <location>
        <begin position="191"/>
        <end position="198"/>
    </location>
</feature>
<feature type="repeat" description="CXXCXGXG motif">
    <location>
        <begin position="205"/>
        <end position="212"/>
    </location>
</feature>
<feature type="zinc finger region" description="CR-type" evidence="1">
    <location>
        <begin position="139"/>
        <end position="217"/>
    </location>
</feature>
<feature type="region of interest" description="Disordered" evidence="2">
    <location>
        <begin position="356"/>
        <end position="379"/>
    </location>
</feature>
<feature type="binding site" evidence="1">
    <location>
        <position position="152"/>
    </location>
    <ligand>
        <name>Zn(2+)</name>
        <dbReference type="ChEBI" id="CHEBI:29105"/>
        <label>1</label>
    </ligand>
</feature>
<feature type="binding site" evidence="1">
    <location>
        <position position="155"/>
    </location>
    <ligand>
        <name>Zn(2+)</name>
        <dbReference type="ChEBI" id="CHEBI:29105"/>
        <label>1</label>
    </ligand>
</feature>
<feature type="binding site" evidence="1">
    <location>
        <position position="169"/>
    </location>
    <ligand>
        <name>Zn(2+)</name>
        <dbReference type="ChEBI" id="CHEBI:29105"/>
        <label>2</label>
    </ligand>
</feature>
<feature type="binding site" evidence="1">
    <location>
        <position position="172"/>
    </location>
    <ligand>
        <name>Zn(2+)</name>
        <dbReference type="ChEBI" id="CHEBI:29105"/>
        <label>2</label>
    </ligand>
</feature>
<feature type="binding site" evidence="1">
    <location>
        <position position="191"/>
    </location>
    <ligand>
        <name>Zn(2+)</name>
        <dbReference type="ChEBI" id="CHEBI:29105"/>
        <label>2</label>
    </ligand>
</feature>
<feature type="binding site" evidence="1">
    <location>
        <position position="194"/>
    </location>
    <ligand>
        <name>Zn(2+)</name>
        <dbReference type="ChEBI" id="CHEBI:29105"/>
        <label>2</label>
    </ligand>
</feature>
<feature type="binding site" evidence="1">
    <location>
        <position position="205"/>
    </location>
    <ligand>
        <name>Zn(2+)</name>
        <dbReference type="ChEBI" id="CHEBI:29105"/>
        <label>1</label>
    </ligand>
</feature>
<feature type="binding site" evidence="1">
    <location>
        <position position="208"/>
    </location>
    <ligand>
        <name>Zn(2+)</name>
        <dbReference type="ChEBI" id="CHEBI:29105"/>
        <label>1</label>
    </ligand>
</feature>
<gene>
    <name evidence="1" type="primary">dnaJ</name>
    <name type="ordered locus">Reut_A2784</name>
</gene>
<reference key="1">
    <citation type="journal article" date="2010" name="PLoS ONE">
        <title>The complete multipartite genome sequence of Cupriavidus necator JMP134, a versatile pollutant degrader.</title>
        <authorList>
            <person name="Lykidis A."/>
            <person name="Perez-Pantoja D."/>
            <person name="Ledger T."/>
            <person name="Mavromatis K."/>
            <person name="Anderson I.J."/>
            <person name="Ivanova N.N."/>
            <person name="Hooper S.D."/>
            <person name="Lapidus A."/>
            <person name="Lucas S."/>
            <person name="Gonzalez B."/>
            <person name="Kyrpides N.C."/>
        </authorList>
    </citation>
    <scope>NUCLEOTIDE SEQUENCE [LARGE SCALE GENOMIC DNA]</scope>
    <source>
        <strain>JMP134 / LMG 1197</strain>
    </source>
</reference>
<dbReference type="EMBL" id="CP000090">
    <property type="protein sequence ID" value="AAZ62145.1"/>
    <property type="molecule type" value="Genomic_DNA"/>
</dbReference>
<dbReference type="SMR" id="Q46XI8"/>
<dbReference type="STRING" id="264198.Reut_A2784"/>
<dbReference type="KEGG" id="reu:Reut_A2784"/>
<dbReference type="eggNOG" id="COG0484">
    <property type="taxonomic scope" value="Bacteria"/>
</dbReference>
<dbReference type="HOGENOM" id="CLU_017633_0_7_4"/>
<dbReference type="OrthoDB" id="9779889at2"/>
<dbReference type="GO" id="GO:0005737">
    <property type="term" value="C:cytoplasm"/>
    <property type="evidence" value="ECO:0007669"/>
    <property type="project" value="UniProtKB-SubCell"/>
</dbReference>
<dbReference type="GO" id="GO:0005524">
    <property type="term" value="F:ATP binding"/>
    <property type="evidence" value="ECO:0007669"/>
    <property type="project" value="InterPro"/>
</dbReference>
<dbReference type="GO" id="GO:0031072">
    <property type="term" value="F:heat shock protein binding"/>
    <property type="evidence" value="ECO:0007669"/>
    <property type="project" value="InterPro"/>
</dbReference>
<dbReference type="GO" id="GO:0051082">
    <property type="term" value="F:unfolded protein binding"/>
    <property type="evidence" value="ECO:0007669"/>
    <property type="project" value="UniProtKB-UniRule"/>
</dbReference>
<dbReference type="GO" id="GO:0008270">
    <property type="term" value="F:zinc ion binding"/>
    <property type="evidence" value="ECO:0007669"/>
    <property type="project" value="UniProtKB-UniRule"/>
</dbReference>
<dbReference type="GO" id="GO:0051085">
    <property type="term" value="P:chaperone cofactor-dependent protein refolding"/>
    <property type="evidence" value="ECO:0007669"/>
    <property type="project" value="TreeGrafter"/>
</dbReference>
<dbReference type="GO" id="GO:0006260">
    <property type="term" value="P:DNA replication"/>
    <property type="evidence" value="ECO:0007669"/>
    <property type="project" value="UniProtKB-KW"/>
</dbReference>
<dbReference type="GO" id="GO:0042026">
    <property type="term" value="P:protein refolding"/>
    <property type="evidence" value="ECO:0007669"/>
    <property type="project" value="TreeGrafter"/>
</dbReference>
<dbReference type="GO" id="GO:0009408">
    <property type="term" value="P:response to heat"/>
    <property type="evidence" value="ECO:0007669"/>
    <property type="project" value="InterPro"/>
</dbReference>
<dbReference type="CDD" id="cd06257">
    <property type="entry name" value="DnaJ"/>
    <property type="match status" value="1"/>
</dbReference>
<dbReference type="CDD" id="cd10747">
    <property type="entry name" value="DnaJ_C"/>
    <property type="match status" value="1"/>
</dbReference>
<dbReference type="FunFam" id="1.10.287.110:FF:000034">
    <property type="entry name" value="Chaperone protein DnaJ"/>
    <property type="match status" value="1"/>
</dbReference>
<dbReference type="FunFam" id="2.10.230.10:FF:000002">
    <property type="entry name" value="Molecular chaperone DnaJ"/>
    <property type="match status" value="1"/>
</dbReference>
<dbReference type="FunFam" id="2.60.260.20:FF:000004">
    <property type="entry name" value="Molecular chaperone DnaJ"/>
    <property type="match status" value="1"/>
</dbReference>
<dbReference type="Gene3D" id="1.10.287.110">
    <property type="entry name" value="DnaJ domain"/>
    <property type="match status" value="1"/>
</dbReference>
<dbReference type="Gene3D" id="2.10.230.10">
    <property type="entry name" value="Heat shock protein DnaJ, cysteine-rich domain"/>
    <property type="match status" value="1"/>
</dbReference>
<dbReference type="Gene3D" id="2.60.260.20">
    <property type="entry name" value="Urease metallochaperone UreE, N-terminal domain"/>
    <property type="match status" value="2"/>
</dbReference>
<dbReference type="HAMAP" id="MF_01152">
    <property type="entry name" value="DnaJ"/>
    <property type="match status" value="1"/>
</dbReference>
<dbReference type="InterPro" id="IPR012724">
    <property type="entry name" value="DnaJ"/>
</dbReference>
<dbReference type="InterPro" id="IPR002939">
    <property type="entry name" value="DnaJ_C"/>
</dbReference>
<dbReference type="InterPro" id="IPR001623">
    <property type="entry name" value="DnaJ_domain"/>
</dbReference>
<dbReference type="InterPro" id="IPR018253">
    <property type="entry name" value="DnaJ_domain_CS"/>
</dbReference>
<dbReference type="InterPro" id="IPR008971">
    <property type="entry name" value="HSP40/DnaJ_pept-bd"/>
</dbReference>
<dbReference type="InterPro" id="IPR001305">
    <property type="entry name" value="HSP_DnaJ_Cys-rich_dom"/>
</dbReference>
<dbReference type="InterPro" id="IPR036410">
    <property type="entry name" value="HSP_DnaJ_Cys-rich_dom_sf"/>
</dbReference>
<dbReference type="InterPro" id="IPR036869">
    <property type="entry name" value="J_dom_sf"/>
</dbReference>
<dbReference type="NCBIfam" id="TIGR02349">
    <property type="entry name" value="DnaJ_bact"/>
    <property type="match status" value="1"/>
</dbReference>
<dbReference type="NCBIfam" id="NF008035">
    <property type="entry name" value="PRK10767.1"/>
    <property type="match status" value="1"/>
</dbReference>
<dbReference type="PANTHER" id="PTHR43096:SF48">
    <property type="entry name" value="CHAPERONE PROTEIN DNAJ"/>
    <property type="match status" value="1"/>
</dbReference>
<dbReference type="PANTHER" id="PTHR43096">
    <property type="entry name" value="DNAJ HOMOLOG 1, MITOCHONDRIAL-RELATED"/>
    <property type="match status" value="1"/>
</dbReference>
<dbReference type="Pfam" id="PF00226">
    <property type="entry name" value="DnaJ"/>
    <property type="match status" value="1"/>
</dbReference>
<dbReference type="Pfam" id="PF01556">
    <property type="entry name" value="DnaJ_C"/>
    <property type="match status" value="1"/>
</dbReference>
<dbReference type="Pfam" id="PF00684">
    <property type="entry name" value="DnaJ_CXXCXGXG"/>
    <property type="match status" value="1"/>
</dbReference>
<dbReference type="PRINTS" id="PR00625">
    <property type="entry name" value="JDOMAIN"/>
</dbReference>
<dbReference type="SMART" id="SM00271">
    <property type="entry name" value="DnaJ"/>
    <property type="match status" value="1"/>
</dbReference>
<dbReference type="SUPFAM" id="SSF46565">
    <property type="entry name" value="Chaperone J-domain"/>
    <property type="match status" value="1"/>
</dbReference>
<dbReference type="SUPFAM" id="SSF57938">
    <property type="entry name" value="DnaJ/Hsp40 cysteine-rich domain"/>
    <property type="match status" value="1"/>
</dbReference>
<dbReference type="SUPFAM" id="SSF49493">
    <property type="entry name" value="HSP40/DnaJ peptide-binding domain"/>
    <property type="match status" value="2"/>
</dbReference>
<dbReference type="PROSITE" id="PS00636">
    <property type="entry name" value="DNAJ_1"/>
    <property type="match status" value="1"/>
</dbReference>
<dbReference type="PROSITE" id="PS50076">
    <property type="entry name" value="DNAJ_2"/>
    <property type="match status" value="1"/>
</dbReference>
<dbReference type="PROSITE" id="PS51188">
    <property type="entry name" value="ZF_CR"/>
    <property type="match status" value="1"/>
</dbReference>
<organism>
    <name type="scientific">Cupriavidus pinatubonensis (strain JMP 134 / LMG 1197)</name>
    <name type="common">Cupriavidus necator (strain JMP 134)</name>
    <dbReference type="NCBI Taxonomy" id="264198"/>
    <lineage>
        <taxon>Bacteria</taxon>
        <taxon>Pseudomonadati</taxon>
        <taxon>Pseudomonadota</taxon>
        <taxon>Betaproteobacteria</taxon>
        <taxon>Burkholderiales</taxon>
        <taxon>Burkholderiaceae</taxon>
        <taxon>Cupriavidus</taxon>
    </lineage>
</organism>